<feature type="chain" id="PRO_0000273894" description="Large ribosomal subunit protein uL30">
    <location>
        <begin position="1"/>
        <end position="63"/>
    </location>
</feature>
<keyword id="KW-0687">Ribonucleoprotein</keyword>
<keyword id="KW-0689">Ribosomal protein</keyword>
<protein>
    <recommendedName>
        <fullName evidence="1">Large ribosomal subunit protein uL30</fullName>
    </recommendedName>
    <alternativeName>
        <fullName evidence="2">50S ribosomal protein L30</fullName>
    </alternativeName>
</protein>
<comment type="subunit">
    <text evidence="1">Part of the 50S ribosomal subunit.</text>
</comment>
<comment type="similarity">
    <text evidence="1">Belongs to the universal ribosomal protein uL30 family.</text>
</comment>
<comment type="sequence caution" evidence="2">
    <conflict type="erroneous initiation">
        <sequence resource="EMBL-CDS" id="AAF83980"/>
    </conflict>
</comment>
<proteinExistence type="inferred from homology"/>
<name>RL30_XYLFA</name>
<organism>
    <name type="scientific">Xylella fastidiosa (strain 9a5c)</name>
    <dbReference type="NCBI Taxonomy" id="160492"/>
    <lineage>
        <taxon>Bacteria</taxon>
        <taxon>Pseudomonadati</taxon>
        <taxon>Pseudomonadota</taxon>
        <taxon>Gammaproteobacteria</taxon>
        <taxon>Lysobacterales</taxon>
        <taxon>Lysobacteraceae</taxon>
        <taxon>Xylella</taxon>
    </lineage>
</organism>
<gene>
    <name evidence="1" type="primary">rpmD</name>
    <name type="ordered locus">XF_1170</name>
</gene>
<reference key="1">
    <citation type="journal article" date="2000" name="Nature">
        <title>The genome sequence of the plant pathogen Xylella fastidiosa.</title>
        <authorList>
            <person name="Simpson A.J.G."/>
            <person name="Reinach F.C."/>
            <person name="Arruda P."/>
            <person name="Abreu F.A."/>
            <person name="Acencio M."/>
            <person name="Alvarenga R."/>
            <person name="Alves L.M.C."/>
            <person name="Araya J.E."/>
            <person name="Baia G.S."/>
            <person name="Baptista C.S."/>
            <person name="Barros M.H."/>
            <person name="Bonaccorsi E.D."/>
            <person name="Bordin S."/>
            <person name="Bove J.M."/>
            <person name="Briones M.R.S."/>
            <person name="Bueno M.R.P."/>
            <person name="Camargo A.A."/>
            <person name="Camargo L.E.A."/>
            <person name="Carraro D.M."/>
            <person name="Carrer H."/>
            <person name="Colauto N.B."/>
            <person name="Colombo C."/>
            <person name="Costa F.F."/>
            <person name="Costa M.C.R."/>
            <person name="Costa-Neto C.M."/>
            <person name="Coutinho L.L."/>
            <person name="Cristofani M."/>
            <person name="Dias-Neto E."/>
            <person name="Docena C."/>
            <person name="El-Dorry H."/>
            <person name="Facincani A.P."/>
            <person name="Ferreira A.J.S."/>
            <person name="Ferreira V.C.A."/>
            <person name="Ferro J.A."/>
            <person name="Fraga J.S."/>
            <person name="Franca S.C."/>
            <person name="Franco M.C."/>
            <person name="Frohme M."/>
            <person name="Furlan L.R."/>
            <person name="Garnier M."/>
            <person name="Goldman G.H."/>
            <person name="Goldman M.H.S."/>
            <person name="Gomes S.L."/>
            <person name="Gruber A."/>
            <person name="Ho P.L."/>
            <person name="Hoheisel J.D."/>
            <person name="Junqueira M.L."/>
            <person name="Kemper E.L."/>
            <person name="Kitajima J.P."/>
            <person name="Krieger J.E."/>
            <person name="Kuramae E.E."/>
            <person name="Laigret F."/>
            <person name="Lambais M.R."/>
            <person name="Leite L.C.C."/>
            <person name="Lemos E.G.M."/>
            <person name="Lemos M.V.F."/>
            <person name="Lopes S.A."/>
            <person name="Lopes C.R."/>
            <person name="Machado J.A."/>
            <person name="Machado M.A."/>
            <person name="Madeira A.M.B.N."/>
            <person name="Madeira H.M.F."/>
            <person name="Marino C.L."/>
            <person name="Marques M.V."/>
            <person name="Martins E.A.L."/>
            <person name="Martins E.M.F."/>
            <person name="Matsukuma A.Y."/>
            <person name="Menck C.F.M."/>
            <person name="Miracca E.C."/>
            <person name="Miyaki C.Y."/>
            <person name="Monteiro-Vitorello C.B."/>
            <person name="Moon D.H."/>
            <person name="Nagai M.A."/>
            <person name="Nascimento A.L.T.O."/>
            <person name="Netto L.E.S."/>
            <person name="Nhani A. Jr."/>
            <person name="Nobrega F.G."/>
            <person name="Nunes L.R."/>
            <person name="Oliveira M.A."/>
            <person name="de Oliveira M.C."/>
            <person name="de Oliveira R.C."/>
            <person name="Palmieri D.A."/>
            <person name="Paris A."/>
            <person name="Peixoto B.R."/>
            <person name="Pereira G.A.G."/>
            <person name="Pereira H.A. Jr."/>
            <person name="Pesquero J.B."/>
            <person name="Quaggio R.B."/>
            <person name="Roberto P.G."/>
            <person name="Rodrigues V."/>
            <person name="de Rosa A.J.M."/>
            <person name="de Rosa V.E. Jr."/>
            <person name="de Sa R.G."/>
            <person name="Santelli R.V."/>
            <person name="Sawasaki H.E."/>
            <person name="da Silva A.C.R."/>
            <person name="da Silva A.M."/>
            <person name="da Silva F.R."/>
            <person name="Silva W.A. Jr."/>
            <person name="da Silveira J.F."/>
            <person name="Silvestri M.L.Z."/>
            <person name="Siqueira W.J."/>
            <person name="de Souza A.A."/>
            <person name="de Souza A.P."/>
            <person name="Terenzi M.F."/>
            <person name="Truffi D."/>
            <person name="Tsai S.M."/>
            <person name="Tsuhako M.H."/>
            <person name="Vallada H."/>
            <person name="Van Sluys M.A."/>
            <person name="Verjovski-Almeida S."/>
            <person name="Vettore A.L."/>
            <person name="Zago M.A."/>
            <person name="Zatz M."/>
            <person name="Meidanis J."/>
            <person name="Setubal J.C."/>
        </authorList>
    </citation>
    <scope>NUCLEOTIDE SEQUENCE [LARGE SCALE GENOMIC DNA]</scope>
    <source>
        <strain>9a5c</strain>
    </source>
</reference>
<dbReference type="EMBL" id="AE003849">
    <property type="protein sequence ID" value="AAF83980.1"/>
    <property type="status" value="ALT_INIT"/>
    <property type="molecule type" value="Genomic_DNA"/>
</dbReference>
<dbReference type="PIR" id="C82714">
    <property type="entry name" value="C82714"/>
</dbReference>
<dbReference type="RefSeq" id="WP_075584665.1">
    <property type="nucleotide sequence ID" value="NC_002488.3"/>
</dbReference>
<dbReference type="SMR" id="Q9PE58"/>
<dbReference type="STRING" id="160492.XF_1170"/>
<dbReference type="KEGG" id="xfa:XF_1170"/>
<dbReference type="eggNOG" id="COG1841">
    <property type="taxonomic scope" value="Bacteria"/>
</dbReference>
<dbReference type="HOGENOM" id="CLU_131047_1_4_6"/>
<dbReference type="Proteomes" id="UP000000812">
    <property type="component" value="Chromosome"/>
</dbReference>
<dbReference type="GO" id="GO:0022625">
    <property type="term" value="C:cytosolic large ribosomal subunit"/>
    <property type="evidence" value="ECO:0007669"/>
    <property type="project" value="TreeGrafter"/>
</dbReference>
<dbReference type="GO" id="GO:0003735">
    <property type="term" value="F:structural constituent of ribosome"/>
    <property type="evidence" value="ECO:0007669"/>
    <property type="project" value="InterPro"/>
</dbReference>
<dbReference type="GO" id="GO:0006412">
    <property type="term" value="P:translation"/>
    <property type="evidence" value="ECO:0007669"/>
    <property type="project" value="UniProtKB-UniRule"/>
</dbReference>
<dbReference type="CDD" id="cd01658">
    <property type="entry name" value="Ribosomal_L30"/>
    <property type="match status" value="1"/>
</dbReference>
<dbReference type="Gene3D" id="3.30.1390.20">
    <property type="entry name" value="Ribosomal protein L30, ferredoxin-like fold domain"/>
    <property type="match status" value="1"/>
</dbReference>
<dbReference type="HAMAP" id="MF_01371_B">
    <property type="entry name" value="Ribosomal_uL30_B"/>
    <property type="match status" value="1"/>
</dbReference>
<dbReference type="InterPro" id="IPR036919">
    <property type="entry name" value="Ribo_uL30_ferredoxin-like_sf"/>
</dbReference>
<dbReference type="InterPro" id="IPR005996">
    <property type="entry name" value="Ribosomal_uL30_bac-type"/>
</dbReference>
<dbReference type="InterPro" id="IPR016082">
    <property type="entry name" value="Ribosomal_uL30_ferredoxin-like"/>
</dbReference>
<dbReference type="NCBIfam" id="TIGR01308">
    <property type="entry name" value="rpmD_bact"/>
    <property type="match status" value="1"/>
</dbReference>
<dbReference type="PANTHER" id="PTHR15892:SF2">
    <property type="entry name" value="LARGE RIBOSOMAL SUBUNIT PROTEIN UL30M"/>
    <property type="match status" value="1"/>
</dbReference>
<dbReference type="PANTHER" id="PTHR15892">
    <property type="entry name" value="MITOCHONDRIAL RIBOSOMAL PROTEIN L30"/>
    <property type="match status" value="1"/>
</dbReference>
<dbReference type="Pfam" id="PF00327">
    <property type="entry name" value="Ribosomal_L30"/>
    <property type="match status" value="1"/>
</dbReference>
<dbReference type="PIRSF" id="PIRSF002211">
    <property type="entry name" value="Ribosomal_L30_bac-type"/>
    <property type="match status" value="1"/>
</dbReference>
<dbReference type="SUPFAM" id="SSF55129">
    <property type="entry name" value="Ribosomal protein L30p/L7e"/>
    <property type="match status" value="1"/>
</dbReference>
<accession>Q9PE58</accession>
<evidence type="ECO:0000255" key="1">
    <source>
        <dbReference type="HAMAP-Rule" id="MF_01371"/>
    </source>
</evidence>
<evidence type="ECO:0000305" key="2"/>
<sequence>MVHEYDNTLKVCLVRSLIGVPSRHRLSVRALGLRKVSDMRKVNDTPQVRGLIKKVHYLVRIQD</sequence>